<proteinExistence type="evidence at protein level"/>
<dbReference type="EMBL" id="AL123456">
    <property type="protein sequence ID" value="CCP44079.1"/>
    <property type="molecule type" value="Genomic_DNA"/>
</dbReference>
<dbReference type="PIR" id="F70769">
    <property type="entry name" value="F70769"/>
</dbReference>
<dbReference type="RefSeq" id="NP_215838.1">
    <property type="nucleotide sequence ID" value="NC_000962.3"/>
</dbReference>
<dbReference type="RefSeq" id="WP_003898823.1">
    <property type="nucleotide sequence ID" value="NZ_NVQJ01000059.1"/>
</dbReference>
<dbReference type="STRING" id="83332.Rv1322"/>
<dbReference type="PaxDb" id="83332-Rv1322"/>
<dbReference type="GeneID" id="886927"/>
<dbReference type="KEGG" id="mtu:Rv1322"/>
<dbReference type="KEGG" id="mtv:RVBD_1322"/>
<dbReference type="TubercuList" id="Rv1322"/>
<dbReference type="eggNOG" id="ENOG5032YDP">
    <property type="taxonomic scope" value="Bacteria"/>
</dbReference>
<dbReference type="InParanoid" id="P9WM27"/>
<dbReference type="OrthoDB" id="3381577at2"/>
<dbReference type="PhylomeDB" id="P9WM27"/>
<dbReference type="Proteomes" id="UP000001584">
    <property type="component" value="Chromosome"/>
</dbReference>
<protein>
    <recommendedName>
        <fullName>Uncharacterized protein Rv1322</fullName>
    </recommendedName>
</protein>
<evidence type="ECO:0000256" key="1">
    <source>
        <dbReference type="SAM" id="MobiDB-lite"/>
    </source>
</evidence>
<name>Y1322_MYCTU</name>
<keyword id="KW-1185">Reference proteome</keyword>
<reference key="1">
    <citation type="journal article" date="1998" name="Nature">
        <title>Deciphering the biology of Mycobacterium tuberculosis from the complete genome sequence.</title>
        <authorList>
            <person name="Cole S.T."/>
            <person name="Brosch R."/>
            <person name="Parkhill J."/>
            <person name="Garnier T."/>
            <person name="Churcher C.M."/>
            <person name="Harris D.E."/>
            <person name="Gordon S.V."/>
            <person name="Eiglmeier K."/>
            <person name="Gas S."/>
            <person name="Barry C.E. III"/>
            <person name="Tekaia F."/>
            <person name="Badcock K."/>
            <person name="Basham D."/>
            <person name="Brown D."/>
            <person name="Chillingworth T."/>
            <person name="Connor R."/>
            <person name="Davies R.M."/>
            <person name="Devlin K."/>
            <person name="Feltwell T."/>
            <person name="Gentles S."/>
            <person name="Hamlin N."/>
            <person name="Holroyd S."/>
            <person name="Hornsby T."/>
            <person name="Jagels K."/>
            <person name="Krogh A."/>
            <person name="McLean J."/>
            <person name="Moule S."/>
            <person name="Murphy L.D."/>
            <person name="Oliver S."/>
            <person name="Osborne J."/>
            <person name="Quail M.A."/>
            <person name="Rajandream M.A."/>
            <person name="Rogers J."/>
            <person name="Rutter S."/>
            <person name="Seeger K."/>
            <person name="Skelton S."/>
            <person name="Squares S."/>
            <person name="Squares R."/>
            <person name="Sulston J.E."/>
            <person name="Taylor K."/>
            <person name="Whitehead S."/>
            <person name="Barrell B.G."/>
        </authorList>
    </citation>
    <scope>NUCLEOTIDE SEQUENCE [LARGE SCALE GENOMIC DNA]</scope>
    <source>
        <strain>ATCC 25618 / H37Rv</strain>
    </source>
</reference>
<reference key="2">
    <citation type="journal article" date="2011" name="Mol. Cell. Proteomics">
        <title>Proteogenomic analysis of Mycobacterium tuberculosis by high resolution mass spectrometry.</title>
        <authorList>
            <person name="Kelkar D.S."/>
            <person name="Kumar D."/>
            <person name="Kumar P."/>
            <person name="Balakrishnan L."/>
            <person name="Muthusamy B."/>
            <person name="Yadav A.K."/>
            <person name="Shrivastava P."/>
            <person name="Marimuthu A."/>
            <person name="Anand S."/>
            <person name="Sundaram H."/>
            <person name="Kingsbury R."/>
            <person name="Harsha H.C."/>
            <person name="Nair B."/>
            <person name="Prasad T.S."/>
            <person name="Chauhan D.S."/>
            <person name="Katoch K."/>
            <person name="Katoch V.M."/>
            <person name="Kumar P."/>
            <person name="Chaerkady R."/>
            <person name="Ramachandran S."/>
            <person name="Dash D."/>
            <person name="Pandey A."/>
        </authorList>
    </citation>
    <scope>IDENTIFICATION BY MASS SPECTROMETRY [LARGE SCALE ANALYSIS]</scope>
    <source>
        <strain>ATCC 25618 / H37Rv</strain>
    </source>
</reference>
<gene>
    <name type="ordered locus">Rv1322</name>
    <name type="ORF">MTCY130.07</name>
</gene>
<organism>
    <name type="scientific">Mycobacterium tuberculosis (strain ATCC 25618 / H37Rv)</name>
    <dbReference type="NCBI Taxonomy" id="83332"/>
    <lineage>
        <taxon>Bacteria</taxon>
        <taxon>Bacillati</taxon>
        <taxon>Actinomycetota</taxon>
        <taxon>Actinomycetes</taxon>
        <taxon>Mycobacteriales</taxon>
        <taxon>Mycobacteriaceae</taxon>
        <taxon>Mycobacterium</taxon>
        <taxon>Mycobacterium tuberculosis complex</taxon>
    </lineage>
</organism>
<feature type="chain" id="PRO_0000103802" description="Uncharacterized protein Rv1322">
    <location>
        <begin position="1"/>
        <end position="98"/>
    </location>
</feature>
<feature type="region of interest" description="Disordered" evidence="1">
    <location>
        <begin position="1"/>
        <end position="21"/>
    </location>
</feature>
<feature type="compositionally biased region" description="Basic residues" evidence="1">
    <location>
        <begin position="1"/>
        <end position="10"/>
    </location>
</feature>
<sequence>MARRRKPLHRQRPEPPSWALRRVEAGPDGHEYEVRPVAAARAVKTYRCPGCDHEIRSGTAHVVVWPTDLPQAGVDDRRHWHTPCWANRATRGPTRKWT</sequence>
<accession>P9WM27</accession>
<accession>L0T920</accession>
<accession>P64805</accession>
<accession>Q10635</accession>